<proteinExistence type="inferred from homology"/>
<reference key="1">
    <citation type="journal article" date="2007" name="Proc. Natl. Acad. Sci. U.S.A.">
        <title>Independent sorting-out of thousands of duplicated gene pairs in two yeast species descended from a whole-genome duplication.</title>
        <authorList>
            <person name="Scannell D.R."/>
            <person name="Frank A.C."/>
            <person name="Conant G.C."/>
            <person name="Byrne K.P."/>
            <person name="Woolfit M."/>
            <person name="Wolfe K.H."/>
        </authorList>
    </citation>
    <scope>NUCLEOTIDE SEQUENCE [LARGE SCALE GENOMIC DNA]</scope>
    <source>
        <strain>ATCC 22028 / DSM 70294 / BCRC 21397 / CBS 2163 / NBRC 10782 / NRRL Y-8283 / UCD 57-17</strain>
    </source>
</reference>
<dbReference type="EMBL" id="DS480407">
    <property type="protein sequence ID" value="EDO17279.1"/>
    <property type="molecule type" value="Genomic_DNA"/>
</dbReference>
<dbReference type="RefSeq" id="XP_001645137.1">
    <property type="nucleotide sequence ID" value="XM_001645087.1"/>
</dbReference>
<dbReference type="SMR" id="A7TKF2"/>
<dbReference type="FunCoup" id="A7TKF2">
    <property type="interactions" value="1431"/>
</dbReference>
<dbReference type="STRING" id="436907.A7TKF2"/>
<dbReference type="GeneID" id="5545485"/>
<dbReference type="KEGG" id="vpo:Kpol_538p39"/>
<dbReference type="eggNOG" id="KOG2314">
    <property type="taxonomic scope" value="Eukaryota"/>
</dbReference>
<dbReference type="HOGENOM" id="CLU_011152_4_0_1"/>
<dbReference type="InParanoid" id="A7TKF2"/>
<dbReference type="OMA" id="LWGGPQF"/>
<dbReference type="OrthoDB" id="10250414at2759"/>
<dbReference type="PhylomeDB" id="A7TKF2"/>
<dbReference type="Proteomes" id="UP000000267">
    <property type="component" value="Unassembled WGS sequence"/>
</dbReference>
<dbReference type="GO" id="GO:0010494">
    <property type="term" value="C:cytoplasmic stress granule"/>
    <property type="evidence" value="ECO:0007669"/>
    <property type="project" value="EnsemblFungi"/>
</dbReference>
<dbReference type="GO" id="GO:0016282">
    <property type="term" value="C:eukaryotic 43S preinitiation complex"/>
    <property type="evidence" value="ECO:0007669"/>
    <property type="project" value="UniProtKB-UniRule"/>
</dbReference>
<dbReference type="GO" id="GO:0033290">
    <property type="term" value="C:eukaryotic 48S preinitiation complex"/>
    <property type="evidence" value="ECO:0007669"/>
    <property type="project" value="UniProtKB-UniRule"/>
</dbReference>
<dbReference type="GO" id="GO:0071540">
    <property type="term" value="C:eukaryotic translation initiation factor 3 complex, eIF3e"/>
    <property type="evidence" value="ECO:0007669"/>
    <property type="project" value="EnsemblFungi"/>
</dbReference>
<dbReference type="GO" id="GO:0071541">
    <property type="term" value="C:eukaryotic translation initiation factor 3 complex, eIF3m"/>
    <property type="evidence" value="ECO:0007669"/>
    <property type="project" value="EnsemblFungi"/>
</dbReference>
<dbReference type="GO" id="GO:0043614">
    <property type="term" value="C:multi-eIF complex"/>
    <property type="evidence" value="ECO:0007669"/>
    <property type="project" value="EnsemblFungi"/>
</dbReference>
<dbReference type="GO" id="GO:0042802">
    <property type="term" value="F:identical protein binding"/>
    <property type="evidence" value="ECO:0007669"/>
    <property type="project" value="EnsemblFungi"/>
</dbReference>
<dbReference type="GO" id="GO:0003723">
    <property type="term" value="F:RNA binding"/>
    <property type="evidence" value="ECO:0007669"/>
    <property type="project" value="UniProtKB-UniRule"/>
</dbReference>
<dbReference type="GO" id="GO:0003743">
    <property type="term" value="F:translation initiation factor activity"/>
    <property type="evidence" value="ECO:0007669"/>
    <property type="project" value="UniProtKB-UniRule"/>
</dbReference>
<dbReference type="GO" id="GO:0031369">
    <property type="term" value="F:translation initiation factor binding"/>
    <property type="evidence" value="ECO:0007669"/>
    <property type="project" value="InterPro"/>
</dbReference>
<dbReference type="GO" id="GO:0001732">
    <property type="term" value="P:formation of cytoplasmic translation initiation complex"/>
    <property type="evidence" value="ECO:0007669"/>
    <property type="project" value="UniProtKB-UniRule"/>
</dbReference>
<dbReference type="CDD" id="cd12278">
    <property type="entry name" value="RRM_eIF3B"/>
    <property type="match status" value="1"/>
</dbReference>
<dbReference type="Gene3D" id="3.30.70.330">
    <property type="match status" value="1"/>
</dbReference>
<dbReference type="Gene3D" id="2.130.10.10">
    <property type="entry name" value="YVTN repeat-like/Quinoprotein amine dehydrogenase"/>
    <property type="match status" value="1"/>
</dbReference>
<dbReference type="HAMAP" id="MF_03001">
    <property type="entry name" value="eIF3b"/>
    <property type="match status" value="1"/>
</dbReference>
<dbReference type="InterPro" id="IPR011400">
    <property type="entry name" value="EIF3B"/>
</dbReference>
<dbReference type="InterPro" id="IPR034363">
    <property type="entry name" value="eIF3B_RRM"/>
</dbReference>
<dbReference type="InterPro" id="IPR012677">
    <property type="entry name" value="Nucleotide-bd_a/b_plait_sf"/>
</dbReference>
<dbReference type="InterPro" id="IPR035979">
    <property type="entry name" value="RBD_domain_sf"/>
</dbReference>
<dbReference type="InterPro" id="IPR000504">
    <property type="entry name" value="RRM_dom"/>
</dbReference>
<dbReference type="InterPro" id="IPR013979">
    <property type="entry name" value="TIF_beta_prop-like"/>
</dbReference>
<dbReference type="InterPro" id="IPR015943">
    <property type="entry name" value="WD40/YVTN_repeat-like_dom_sf"/>
</dbReference>
<dbReference type="PANTHER" id="PTHR14068">
    <property type="entry name" value="EUKARYOTIC TRANSLATION INITIATION FACTOR 3 EIF3 -RELATED"/>
    <property type="match status" value="1"/>
</dbReference>
<dbReference type="PANTHER" id="PTHR14068:SF0">
    <property type="entry name" value="EUKARYOTIC TRANSLATION INITIATION FACTOR 3 SUBUNIT B"/>
    <property type="match status" value="1"/>
</dbReference>
<dbReference type="Pfam" id="PF08662">
    <property type="entry name" value="eIF2A"/>
    <property type="match status" value="1"/>
</dbReference>
<dbReference type="Pfam" id="PF00076">
    <property type="entry name" value="RRM_1"/>
    <property type="match status" value="1"/>
</dbReference>
<dbReference type="PIRSF" id="PIRSF036424">
    <property type="entry name" value="eIF3b"/>
    <property type="match status" value="1"/>
</dbReference>
<dbReference type="SUPFAM" id="SSF82171">
    <property type="entry name" value="DPP6 N-terminal domain-like"/>
    <property type="match status" value="1"/>
</dbReference>
<dbReference type="SUPFAM" id="SSF54928">
    <property type="entry name" value="RNA-binding domain, RBD"/>
    <property type="match status" value="1"/>
</dbReference>
<dbReference type="PROSITE" id="PS50102">
    <property type="entry name" value="RRM"/>
    <property type="match status" value="1"/>
</dbReference>
<sequence length="726" mass="82947">MSAALEDIKLEDIPVDDIDFSDLEKQYSVNDTVSFDQYIVVCGAPVIPEGKVAVLKKALTGLFSKAGKVVDIEFPIEDGKTKGFLFVECASPADGNKIIKAFHTKRLDLKHRLFIYTMRDVEKYNDKNFPTEFVEPEIPDFFPTSTLKSWLSDEDGRDQFVLQANEMTTVLWNSAIEDEESVVESRKNWSTNYIRFSPKGTYLFSYHPQGVVMWGGPHFDRLRRFYHPNVRTSSVSPSEKFLVTYSPDPIVVDEEDADCPFTKKNEGHQLCIWDIDSGLLQSTFPVVKSSYLQWPLVRWSYNDQYCARMVGETLVVHDVKKGFAVMDNKTLKVPGIRDFSFAPTGVKIAPFRANDKESVILAYWTPETNNMSCKATIVDVERSRVLKTVNLVQVSNVTLHWQSDSEFLCFNVERHTKSKKTQFSNLEICKLTEKDIPGDKIELKDCVVDFAWEPHGNRFGVIAVRETGDDNIAIPKNVATFFAPEKRDVKDKSTGVKKWLEVASITDKFSNTISWSPAGRYVVVATLVKPNVRRSDFVFYDMDFATDKNMNVTKDVHASLKEVATNSFPSATDMAWDPSGRFLAVWSSSLKHKMENGYKVFNVAGTIVKEEPLNSFKNFAWRPRPASLLTNAEKKKIRKNLKEWTAQFAEQDAMEADAATRDMILRQREMLKDWTEYRAEIGARFEEEFGYKTFNMIPLSNSEDDFTSVEEVKEEVLEESEEKVVE</sequence>
<organism>
    <name type="scientific">Vanderwaltozyma polyspora (strain ATCC 22028 / DSM 70294 / BCRC 21397 / CBS 2163 / NBRC 10782 / NRRL Y-8283 / UCD 57-17)</name>
    <name type="common">Kluyveromyces polysporus</name>
    <dbReference type="NCBI Taxonomy" id="436907"/>
    <lineage>
        <taxon>Eukaryota</taxon>
        <taxon>Fungi</taxon>
        <taxon>Dikarya</taxon>
        <taxon>Ascomycota</taxon>
        <taxon>Saccharomycotina</taxon>
        <taxon>Saccharomycetes</taxon>
        <taxon>Saccharomycetales</taxon>
        <taxon>Saccharomycetaceae</taxon>
        <taxon>Vanderwaltozyma</taxon>
    </lineage>
</organism>
<protein>
    <recommendedName>
        <fullName evidence="1">Eukaryotic translation initiation factor 3 subunit B</fullName>
        <shortName evidence="1">eIF3b</shortName>
    </recommendedName>
    <alternativeName>
        <fullName evidence="1">Eukaryotic translation initiation factor 3 90 kDa subunit homolog</fullName>
        <shortName evidence="1">eIF3 p90</shortName>
    </alternativeName>
    <alternativeName>
        <fullName>Translation initiation factor eIF3 p90 subunit homolog</fullName>
    </alternativeName>
</protein>
<evidence type="ECO:0000255" key="1">
    <source>
        <dbReference type="HAMAP-Rule" id="MF_03001"/>
    </source>
</evidence>
<keyword id="KW-0963">Cytoplasm</keyword>
<keyword id="KW-0396">Initiation factor</keyword>
<keyword id="KW-0648">Protein biosynthesis</keyword>
<keyword id="KW-1185">Reference proteome</keyword>
<keyword id="KW-0677">Repeat</keyword>
<keyword id="KW-0694">RNA-binding</keyword>
<keyword id="KW-0853">WD repeat</keyword>
<comment type="function">
    <text evidence="1">RNA-binding component of the eukaryotic translation initiation factor 3 (eIF-3) complex, which is involved in protein synthesis of a specialized repertoire of mRNAs and, together with other initiation factors, stimulates binding of mRNA and methionyl-tRNAi to the 40S ribosome. The eIF-3 complex specifically targets and initiates translation of a subset of mRNAs involved in cell proliferation.</text>
</comment>
<comment type="subunit">
    <text evidence="1">Component of the eukaryotic translation initiation factor 3 (eIF-3) complex.</text>
</comment>
<comment type="subcellular location">
    <subcellularLocation>
        <location evidence="1">Cytoplasm</location>
    </subcellularLocation>
</comment>
<comment type="similarity">
    <text evidence="1">Belongs to the eIF-3 subunit B family.</text>
</comment>
<gene>
    <name evidence="1" type="primary">PRT1</name>
    <name type="ORF">Kpol_538p39</name>
</gene>
<accession>A7TKF2</accession>
<name>EIF3B_VANPO</name>
<feature type="chain" id="PRO_0000363826" description="Eukaryotic translation initiation factor 3 subunit B">
    <location>
        <begin position="1"/>
        <end position="726"/>
    </location>
</feature>
<feature type="domain" description="RRM" evidence="1">
    <location>
        <begin position="37"/>
        <end position="120"/>
    </location>
</feature>
<feature type="repeat" description="WD 1">
    <location>
        <begin position="142"/>
        <end position="182"/>
    </location>
</feature>
<feature type="repeat" description="WD 2">
    <location>
        <begin position="186"/>
        <end position="224"/>
    </location>
</feature>
<feature type="repeat" description="WD 3">
    <location>
        <begin position="235"/>
        <end position="283"/>
    </location>
</feature>
<feature type="repeat" description="WD 4">
    <location>
        <begin position="331"/>
        <end position="374"/>
    </location>
</feature>
<feature type="repeat" description="WD 5">
    <location>
        <begin position="442"/>
        <end position="485"/>
    </location>
</feature>
<feature type="repeat" description="WD 6">
    <location>
        <begin position="505"/>
        <end position="549"/>
    </location>
</feature>
<feature type="repeat" description="WD 7">
    <location>
        <begin position="566"/>
        <end position="611"/>
    </location>
</feature>
<feature type="region of interest" description="Sufficient for interaction with PIC8" evidence="1">
    <location>
        <begin position="1"/>
        <end position="219"/>
    </location>
</feature>
<feature type="region of interest" description="Sufficient for interaction with HCR1 and TIF32" evidence="1">
    <location>
        <begin position="1"/>
        <end position="94"/>
    </location>
</feature>